<reference key="1">
    <citation type="journal article" date="2006" name="Lancet">
        <title>Complete genome sequence of USA300, an epidemic clone of community-acquired meticillin-resistant Staphylococcus aureus.</title>
        <authorList>
            <person name="Diep B.A."/>
            <person name="Gill S.R."/>
            <person name="Chang R.F."/>
            <person name="Phan T.H."/>
            <person name="Chen J.H."/>
            <person name="Davidson M.G."/>
            <person name="Lin F."/>
            <person name="Lin J."/>
            <person name="Carleton H.A."/>
            <person name="Mongodin E.F."/>
            <person name="Sensabaugh G.F."/>
            <person name="Perdreau-Remington F."/>
        </authorList>
    </citation>
    <scope>NUCLEOTIDE SEQUENCE [LARGE SCALE GENOMIC DNA]</scope>
    <source>
        <strain>USA300</strain>
    </source>
</reference>
<protein>
    <recommendedName>
        <fullName evidence="1">Enolase</fullName>
        <ecNumber evidence="1">4.2.1.11</ecNumber>
    </recommendedName>
    <alternativeName>
        <fullName evidence="1">2-phospho-D-glycerate hydro-lyase</fullName>
    </alternativeName>
    <alternativeName>
        <fullName evidence="1">2-phosphoglycerate dehydratase</fullName>
    </alternativeName>
</protein>
<keyword id="KW-0963">Cytoplasm</keyword>
<keyword id="KW-0324">Glycolysis</keyword>
<keyword id="KW-0456">Lyase</keyword>
<keyword id="KW-0460">Magnesium</keyword>
<keyword id="KW-0479">Metal-binding</keyword>
<keyword id="KW-0964">Secreted</keyword>
<keyword id="KW-0843">Virulence</keyword>
<sequence>MPIITDVYAREVLDSRGNPTVEVEVLTESGAFGRALVPSGASTGEHEAVELRDGDKSRYLGKGVTKAVENVNEIIAPEIIEGEFSVLDQVSIDKMMIALDGTPNKGKLGANAILGVSIAVARAAADLLGQPLYKYLGGFNGKQLPVPMMNIVNGGSHSDAPIAFQEFMILPVGATTFKESLRWGTEIFHNLKSILSKRGLETAVGDEGGFAPKFEGTEDAVETIIQAIEAAGYKPGEEVFLGFDCASSEFYENGVYDYSKFEGEHGAKRTAAEQVDYLEQLVDKYPIITIEDGMDENDWDGWKQLTERIGDRVQLVGDDLFVTNTEILAKGIENGIGNSILIKVNQIGTLTETFDAIEMAQKAGYTAVVSHRSGETEDTTIADIAVATNAGQIKTGSLSRTDRIAKYNQLLRIEDELFETAKYDGIKSFYNLDK</sequence>
<name>ENO_STAA3</name>
<evidence type="ECO:0000255" key="1">
    <source>
        <dbReference type="HAMAP-Rule" id="MF_00318"/>
    </source>
</evidence>
<feature type="chain" id="PRO_0000267112" description="Enolase">
    <location>
        <begin position="1"/>
        <end position="434"/>
    </location>
</feature>
<feature type="active site" description="Proton donor" evidence="1">
    <location>
        <position position="207"/>
    </location>
</feature>
<feature type="active site" description="Proton acceptor" evidence="1">
    <location>
        <position position="343"/>
    </location>
</feature>
<feature type="binding site" evidence="1">
    <location>
        <position position="165"/>
    </location>
    <ligand>
        <name>(2R)-2-phosphoglycerate</name>
        <dbReference type="ChEBI" id="CHEBI:58289"/>
    </ligand>
</feature>
<feature type="binding site" evidence="1">
    <location>
        <position position="244"/>
    </location>
    <ligand>
        <name>Mg(2+)</name>
        <dbReference type="ChEBI" id="CHEBI:18420"/>
    </ligand>
</feature>
<feature type="binding site" evidence="1">
    <location>
        <position position="291"/>
    </location>
    <ligand>
        <name>Mg(2+)</name>
        <dbReference type="ChEBI" id="CHEBI:18420"/>
    </ligand>
</feature>
<feature type="binding site" evidence="1">
    <location>
        <position position="318"/>
    </location>
    <ligand>
        <name>Mg(2+)</name>
        <dbReference type="ChEBI" id="CHEBI:18420"/>
    </ligand>
</feature>
<feature type="binding site" evidence="1">
    <location>
        <position position="343"/>
    </location>
    <ligand>
        <name>(2R)-2-phosphoglycerate</name>
        <dbReference type="ChEBI" id="CHEBI:58289"/>
    </ligand>
</feature>
<feature type="binding site" evidence="1">
    <location>
        <position position="372"/>
    </location>
    <ligand>
        <name>(2R)-2-phosphoglycerate</name>
        <dbReference type="ChEBI" id="CHEBI:58289"/>
    </ligand>
</feature>
<feature type="binding site" evidence="1">
    <location>
        <position position="373"/>
    </location>
    <ligand>
        <name>(2R)-2-phosphoglycerate</name>
        <dbReference type="ChEBI" id="CHEBI:58289"/>
    </ligand>
</feature>
<feature type="binding site" evidence="1">
    <location>
        <position position="394"/>
    </location>
    <ligand>
        <name>(2R)-2-phosphoglycerate</name>
        <dbReference type="ChEBI" id="CHEBI:58289"/>
    </ligand>
</feature>
<accession>Q2FIL7</accession>
<gene>
    <name evidence="1" type="primary">eno</name>
    <name type="ordered locus">SAUSA300_0760</name>
</gene>
<dbReference type="EC" id="4.2.1.11" evidence="1"/>
<dbReference type="EMBL" id="CP000255">
    <property type="protein sequence ID" value="ABD20598.1"/>
    <property type="molecule type" value="Genomic_DNA"/>
</dbReference>
<dbReference type="RefSeq" id="WP_001121760.1">
    <property type="nucleotide sequence ID" value="NZ_CP027476.1"/>
</dbReference>
<dbReference type="SMR" id="Q2FIL7"/>
<dbReference type="KEGG" id="saa:SAUSA300_0760"/>
<dbReference type="HOGENOM" id="CLU_031223_2_1_9"/>
<dbReference type="OMA" id="RCMMSHR"/>
<dbReference type="UniPathway" id="UPA00109">
    <property type="reaction ID" value="UER00187"/>
</dbReference>
<dbReference type="Proteomes" id="UP000001939">
    <property type="component" value="Chromosome"/>
</dbReference>
<dbReference type="GO" id="GO:0009986">
    <property type="term" value="C:cell surface"/>
    <property type="evidence" value="ECO:0007669"/>
    <property type="project" value="UniProtKB-SubCell"/>
</dbReference>
<dbReference type="GO" id="GO:0005576">
    <property type="term" value="C:extracellular region"/>
    <property type="evidence" value="ECO:0007669"/>
    <property type="project" value="UniProtKB-SubCell"/>
</dbReference>
<dbReference type="GO" id="GO:0000015">
    <property type="term" value="C:phosphopyruvate hydratase complex"/>
    <property type="evidence" value="ECO:0007669"/>
    <property type="project" value="InterPro"/>
</dbReference>
<dbReference type="GO" id="GO:0000287">
    <property type="term" value="F:magnesium ion binding"/>
    <property type="evidence" value="ECO:0007669"/>
    <property type="project" value="UniProtKB-UniRule"/>
</dbReference>
<dbReference type="GO" id="GO:0004634">
    <property type="term" value="F:phosphopyruvate hydratase activity"/>
    <property type="evidence" value="ECO:0007669"/>
    <property type="project" value="UniProtKB-UniRule"/>
</dbReference>
<dbReference type="GO" id="GO:0006096">
    <property type="term" value="P:glycolytic process"/>
    <property type="evidence" value="ECO:0007669"/>
    <property type="project" value="UniProtKB-UniRule"/>
</dbReference>
<dbReference type="CDD" id="cd03313">
    <property type="entry name" value="enolase"/>
    <property type="match status" value="1"/>
</dbReference>
<dbReference type="FunFam" id="3.20.20.120:FF:000001">
    <property type="entry name" value="Enolase"/>
    <property type="match status" value="1"/>
</dbReference>
<dbReference type="FunFam" id="3.30.390.10:FF:000001">
    <property type="entry name" value="Enolase"/>
    <property type="match status" value="1"/>
</dbReference>
<dbReference type="Gene3D" id="3.20.20.120">
    <property type="entry name" value="Enolase-like C-terminal domain"/>
    <property type="match status" value="1"/>
</dbReference>
<dbReference type="Gene3D" id="3.30.390.10">
    <property type="entry name" value="Enolase-like, N-terminal domain"/>
    <property type="match status" value="1"/>
</dbReference>
<dbReference type="HAMAP" id="MF_00318">
    <property type="entry name" value="Enolase"/>
    <property type="match status" value="1"/>
</dbReference>
<dbReference type="InterPro" id="IPR000941">
    <property type="entry name" value="Enolase"/>
</dbReference>
<dbReference type="InterPro" id="IPR036849">
    <property type="entry name" value="Enolase-like_C_sf"/>
</dbReference>
<dbReference type="InterPro" id="IPR029017">
    <property type="entry name" value="Enolase-like_N"/>
</dbReference>
<dbReference type="InterPro" id="IPR020810">
    <property type="entry name" value="Enolase_C"/>
</dbReference>
<dbReference type="InterPro" id="IPR020809">
    <property type="entry name" value="Enolase_CS"/>
</dbReference>
<dbReference type="InterPro" id="IPR020811">
    <property type="entry name" value="Enolase_N"/>
</dbReference>
<dbReference type="NCBIfam" id="TIGR01060">
    <property type="entry name" value="eno"/>
    <property type="match status" value="1"/>
</dbReference>
<dbReference type="PANTHER" id="PTHR11902">
    <property type="entry name" value="ENOLASE"/>
    <property type="match status" value="1"/>
</dbReference>
<dbReference type="PANTHER" id="PTHR11902:SF1">
    <property type="entry name" value="ENOLASE"/>
    <property type="match status" value="1"/>
</dbReference>
<dbReference type="Pfam" id="PF00113">
    <property type="entry name" value="Enolase_C"/>
    <property type="match status" value="1"/>
</dbReference>
<dbReference type="Pfam" id="PF03952">
    <property type="entry name" value="Enolase_N"/>
    <property type="match status" value="1"/>
</dbReference>
<dbReference type="PIRSF" id="PIRSF001400">
    <property type="entry name" value="Enolase"/>
    <property type="match status" value="1"/>
</dbReference>
<dbReference type="PRINTS" id="PR00148">
    <property type="entry name" value="ENOLASE"/>
</dbReference>
<dbReference type="SFLD" id="SFLDF00002">
    <property type="entry name" value="enolase"/>
    <property type="match status" value="1"/>
</dbReference>
<dbReference type="SFLD" id="SFLDG00178">
    <property type="entry name" value="enolase"/>
    <property type="match status" value="1"/>
</dbReference>
<dbReference type="SMART" id="SM01192">
    <property type="entry name" value="Enolase_C"/>
    <property type="match status" value="1"/>
</dbReference>
<dbReference type="SMART" id="SM01193">
    <property type="entry name" value="Enolase_N"/>
    <property type="match status" value="1"/>
</dbReference>
<dbReference type="SUPFAM" id="SSF51604">
    <property type="entry name" value="Enolase C-terminal domain-like"/>
    <property type="match status" value="1"/>
</dbReference>
<dbReference type="SUPFAM" id="SSF54826">
    <property type="entry name" value="Enolase N-terminal domain-like"/>
    <property type="match status" value="1"/>
</dbReference>
<dbReference type="PROSITE" id="PS00164">
    <property type="entry name" value="ENOLASE"/>
    <property type="match status" value="1"/>
</dbReference>
<organism>
    <name type="scientific">Staphylococcus aureus (strain USA300)</name>
    <dbReference type="NCBI Taxonomy" id="367830"/>
    <lineage>
        <taxon>Bacteria</taxon>
        <taxon>Bacillati</taxon>
        <taxon>Bacillota</taxon>
        <taxon>Bacilli</taxon>
        <taxon>Bacillales</taxon>
        <taxon>Staphylococcaceae</taxon>
        <taxon>Staphylococcus</taxon>
    </lineage>
</organism>
<comment type="function">
    <text evidence="1">Catalyzes the reversible conversion of 2-phosphoglycerate (2-PG) into phosphoenolpyruvate (PEP). It is essential for the degradation of carbohydrates via glycolysis.</text>
</comment>
<comment type="catalytic activity">
    <reaction evidence="1">
        <text>(2R)-2-phosphoglycerate = phosphoenolpyruvate + H2O</text>
        <dbReference type="Rhea" id="RHEA:10164"/>
        <dbReference type="ChEBI" id="CHEBI:15377"/>
        <dbReference type="ChEBI" id="CHEBI:58289"/>
        <dbReference type="ChEBI" id="CHEBI:58702"/>
        <dbReference type="EC" id="4.2.1.11"/>
    </reaction>
</comment>
<comment type="cofactor">
    <cofactor evidence="1">
        <name>Mg(2+)</name>
        <dbReference type="ChEBI" id="CHEBI:18420"/>
    </cofactor>
    <text evidence="1">Binds a second Mg(2+) ion via substrate during catalysis.</text>
</comment>
<comment type="pathway">
    <text evidence="1">Carbohydrate degradation; glycolysis; pyruvate from D-glyceraldehyde 3-phosphate: step 4/5.</text>
</comment>
<comment type="subcellular location">
    <subcellularLocation>
        <location evidence="1">Cytoplasm</location>
    </subcellularLocation>
    <subcellularLocation>
        <location evidence="1">Secreted</location>
    </subcellularLocation>
    <subcellularLocation>
        <location evidence="1">Cell surface</location>
    </subcellularLocation>
    <text evidence="1">Fractions of enolase are present in both the cytoplasm and on the cell surface.</text>
</comment>
<comment type="similarity">
    <text evidence="1">Belongs to the enolase family.</text>
</comment>
<proteinExistence type="inferred from homology"/>